<keyword id="KW-1003">Cell membrane</keyword>
<keyword id="KW-0342">GTP-binding</keyword>
<keyword id="KW-0449">Lipoprotein</keyword>
<keyword id="KW-0472">Membrane</keyword>
<keyword id="KW-0488">Methylation</keyword>
<keyword id="KW-0547">Nucleotide-binding</keyword>
<keyword id="KW-0636">Prenylation</keyword>
<keyword id="KW-1185">Reference proteome</keyword>
<feature type="chain" id="PRO_0000198909" description="Rho-related protein racL">
    <location>
        <begin position="1"/>
        <end position="193"/>
    </location>
</feature>
<feature type="propeptide" id="PRO_0000281258" description="Removed in mature form" evidence="1">
    <location>
        <begin position="194"/>
        <end position="196"/>
    </location>
</feature>
<feature type="short sequence motif" description="Effector region" evidence="2">
    <location>
        <begin position="32"/>
        <end position="40"/>
    </location>
</feature>
<feature type="binding site" evidence="1">
    <location>
        <begin position="10"/>
        <end position="17"/>
    </location>
    <ligand>
        <name>GTP</name>
        <dbReference type="ChEBI" id="CHEBI:37565"/>
    </ligand>
</feature>
<feature type="binding site" evidence="1">
    <location>
        <begin position="57"/>
        <end position="61"/>
    </location>
    <ligand>
        <name>GTP</name>
        <dbReference type="ChEBI" id="CHEBI:37565"/>
    </ligand>
</feature>
<feature type="binding site" evidence="1">
    <location>
        <begin position="116"/>
        <end position="119"/>
    </location>
    <ligand>
        <name>GTP</name>
        <dbReference type="ChEBI" id="CHEBI:37565"/>
    </ligand>
</feature>
<feature type="modified residue" description="Cysteine methyl ester" evidence="1">
    <location>
        <position position="193"/>
    </location>
</feature>
<feature type="lipid moiety-binding region" description="S-geranylgeranyl cysteine" evidence="1">
    <location>
        <position position="193"/>
    </location>
</feature>
<dbReference type="EMBL" id="AF310897">
    <property type="protein sequence ID" value="AAG45143.1"/>
    <property type="molecule type" value="Genomic_DNA"/>
</dbReference>
<dbReference type="EMBL" id="AAFI02000197">
    <property type="protein sequence ID" value="EAL60957.1"/>
    <property type="molecule type" value="Genomic_DNA"/>
</dbReference>
<dbReference type="RefSeq" id="XP_629400.1">
    <property type="nucleotide sequence ID" value="XM_629398.1"/>
</dbReference>
<dbReference type="SMR" id="Q9GPQ8"/>
<dbReference type="FunCoup" id="Q9GPQ8">
    <property type="interactions" value="57"/>
</dbReference>
<dbReference type="STRING" id="44689.Q9GPQ8"/>
<dbReference type="PaxDb" id="44689-DDB0201660"/>
<dbReference type="EnsemblProtists" id="EAL60957">
    <property type="protein sequence ID" value="EAL60957"/>
    <property type="gene ID" value="DDB_G0292816"/>
</dbReference>
<dbReference type="GeneID" id="8628919"/>
<dbReference type="KEGG" id="ddi:DDB_G0292816"/>
<dbReference type="dictyBase" id="DDB_G0292816">
    <property type="gene designation" value="racL"/>
</dbReference>
<dbReference type="VEuPathDB" id="AmoebaDB:DDB_G0292816"/>
<dbReference type="eggNOG" id="KOG0393">
    <property type="taxonomic scope" value="Eukaryota"/>
</dbReference>
<dbReference type="HOGENOM" id="CLU_041217_21_3_1"/>
<dbReference type="InParanoid" id="Q9GPQ8"/>
<dbReference type="OMA" id="ISEKWMP"/>
<dbReference type="PhylomeDB" id="Q9GPQ8"/>
<dbReference type="Reactome" id="R-DDI-6798695">
    <property type="pathway name" value="Neutrophil degranulation"/>
</dbReference>
<dbReference type="Reactome" id="R-DDI-9013404">
    <property type="pathway name" value="RAC2 GTPase cycle"/>
</dbReference>
<dbReference type="Reactome" id="R-DDI-9013407">
    <property type="pathway name" value="RHOH GTPase cycle"/>
</dbReference>
<dbReference type="Reactome" id="R-DDI-9013408">
    <property type="pathway name" value="RHOG GTPase cycle"/>
</dbReference>
<dbReference type="Reactome" id="R-DDI-9013418">
    <property type="pathway name" value="RHOBTB2 GTPase cycle"/>
</dbReference>
<dbReference type="Reactome" id="R-DDI-9013422">
    <property type="pathway name" value="RHOBTB1 GTPase cycle"/>
</dbReference>
<dbReference type="PRO" id="PR:Q9GPQ8"/>
<dbReference type="Proteomes" id="UP000002195">
    <property type="component" value="Chromosome 6"/>
</dbReference>
<dbReference type="GO" id="GO:0042995">
    <property type="term" value="C:cell projection"/>
    <property type="evidence" value="ECO:0000318"/>
    <property type="project" value="GO_Central"/>
</dbReference>
<dbReference type="GO" id="GO:0031410">
    <property type="term" value="C:cytoplasmic vesicle"/>
    <property type="evidence" value="ECO:0000318"/>
    <property type="project" value="GO_Central"/>
</dbReference>
<dbReference type="GO" id="GO:0005856">
    <property type="term" value="C:cytoskeleton"/>
    <property type="evidence" value="ECO:0000318"/>
    <property type="project" value="GO_Central"/>
</dbReference>
<dbReference type="GO" id="GO:0005886">
    <property type="term" value="C:plasma membrane"/>
    <property type="evidence" value="ECO:0000318"/>
    <property type="project" value="GO_Central"/>
</dbReference>
<dbReference type="GO" id="GO:0005525">
    <property type="term" value="F:GTP binding"/>
    <property type="evidence" value="ECO:0000318"/>
    <property type="project" value="GO_Central"/>
</dbReference>
<dbReference type="GO" id="GO:0003924">
    <property type="term" value="F:GTPase activity"/>
    <property type="evidence" value="ECO:0000318"/>
    <property type="project" value="GO_Central"/>
</dbReference>
<dbReference type="GO" id="GO:0019901">
    <property type="term" value="F:protein kinase binding"/>
    <property type="evidence" value="ECO:0000318"/>
    <property type="project" value="GO_Central"/>
</dbReference>
<dbReference type="GO" id="GO:0007015">
    <property type="term" value="P:actin filament organization"/>
    <property type="evidence" value="ECO:0000318"/>
    <property type="project" value="GO_Central"/>
</dbReference>
<dbReference type="GO" id="GO:0030865">
    <property type="term" value="P:cortical cytoskeleton organization"/>
    <property type="evidence" value="ECO:0000318"/>
    <property type="project" value="GO_Central"/>
</dbReference>
<dbReference type="GO" id="GO:0007163">
    <property type="term" value="P:establishment or maintenance of cell polarity"/>
    <property type="evidence" value="ECO:0000318"/>
    <property type="project" value="GO_Central"/>
</dbReference>
<dbReference type="GO" id="GO:0000281">
    <property type="term" value="P:mitotic cytokinesis"/>
    <property type="evidence" value="ECO:0000318"/>
    <property type="project" value="GO_Central"/>
</dbReference>
<dbReference type="GO" id="GO:0032956">
    <property type="term" value="P:regulation of actin cytoskeleton organization"/>
    <property type="evidence" value="ECO:0000318"/>
    <property type="project" value="GO_Central"/>
</dbReference>
<dbReference type="GO" id="GO:0008360">
    <property type="term" value="P:regulation of cell shape"/>
    <property type="evidence" value="ECO:0000318"/>
    <property type="project" value="GO_Central"/>
</dbReference>
<dbReference type="GO" id="GO:0019953">
    <property type="term" value="P:sexual reproduction"/>
    <property type="evidence" value="ECO:0000270"/>
    <property type="project" value="dictyBase"/>
</dbReference>
<dbReference type="GO" id="GO:0007165">
    <property type="term" value="P:signal transduction"/>
    <property type="evidence" value="ECO:0000318"/>
    <property type="project" value="GO_Central"/>
</dbReference>
<dbReference type="GO" id="GO:0007264">
    <property type="term" value="P:small GTPase-mediated signal transduction"/>
    <property type="evidence" value="ECO:0007669"/>
    <property type="project" value="InterPro"/>
</dbReference>
<dbReference type="CDD" id="cd00157">
    <property type="entry name" value="Rho"/>
    <property type="match status" value="1"/>
</dbReference>
<dbReference type="FunFam" id="3.40.50.300:FF:001179">
    <property type="entry name" value="Rho family GTPase"/>
    <property type="match status" value="1"/>
</dbReference>
<dbReference type="Gene3D" id="3.40.50.300">
    <property type="entry name" value="P-loop containing nucleotide triphosphate hydrolases"/>
    <property type="match status" value="1"/>
</dbReference>
<dbReference type="InterPro" id="IPR027417">
    <property type="entry name" value="P-loop_NTPase"/>
</dbReference>
<dbReference type="InterPro" id="IPR005225">
    <property type="entry name" value="Small_GTP-bd"/>
</dbReference>
<dbReference type="InterPro" id="IPR001806">
    <property type="entry name" value="Small_GTPase"/>
</dbReference>
<dbReference type="InterPro" id="IPR003578">
    <property type="entry name" value="Small_GTPase_Rho"/>
</dbReference>
<dbReference type="NCBIfam" id="TIGR00231">
    <property type="entry name" value="small_GTP"/>
    <property type="match status" value="1"/>
</dbReference>
<dbReference type="PANTHER" id="PTHR24072">
    <property type="entry name" value="RHO FAMILY GTPASE"/>
    <property type="match status" value="1"/>
</dbReference>
<dbReference type="Pfam" id="PF00071">
    <property type="entry name" value="Ras"/>
    <property type="match status" value="1"/>
</dbReference>
<dbReference type="PRINTS" id="PR00449">
    <property type="entry name" value="RASTRNSFRMNG"/>
</dbReference>
<dbReference type="SMART" id="SM00175">
    <property type="entry name" value="RAB"/>
    <property type="match status" value="1"/>
</dbReference>
<dbReference type="SMART" id="SM00173">
    <property type="entry name" value="RAS"/>
    <property type="match status" value="1"/>
</dbReference>
<dbReference type="SMART" id="SM00174">
    <property type="entry name" value="RHO"/>
    <property type="match status" value="1"/>
</dbReference>
<dbReference type="SUPFAM" id="SSF52540">
    <property type="entry name" value="P-loop containing nucleoside triphosphate hydrolases"/>
    <property type="match status" value="1"/>
</dbReference>
<dbReference type="PROSITE" id="PS51420">
    <property type="entry name" value="RHO"/>
    <property type="match status" value="1"/>
</dbReference>
<gene>
    <name type="primary">racL</name>
    <name type="ORF">DDB_G0292816</name>
</gene>
<comment type="subcellular location">
    <subcellularLocation>
        <location evidence="3">Cell membrane</location>
        <topology evidence="3">Lipid-anchor</topology>
        <orientation evidence="3">Cytoplasmic side</orientation>
    </subcellularLocation>
</comment>
<comment type="similarity">
    <text evidence="3">Belongs to the small GTPase superfamily. Rho family.</text>
</comment>
<accession>Q9GPQ8</accession>
<accession>Q54CL6</accession>
<proteinExistence type="inferred from homology"/>
<sequence>MQYIKMVICGDGAVGKTSLLIAFASGEFPRDYQPTVFDNFSTLYMFQNKAYNLGLFDTAGQEDFDRLRPLGYNDTDLFLICYSVINPPSYANVYDKWYSEIKLYTGSEIPLILVGTQNDLRHDKATRETLALKQQAPISYEEGMMMRKRIGAKAFTECSVVSGKNVKQVFEEAIKVYQDRQIEISKSKEKNNCIIL</sequence>
<organism>
    <name type="scientific">Dictyostelium discoideum</name>
    <name type="common">Social amoeba</name>
    <dbReference type="NCBI Taxonomy" id="44689"/>
    <lineage>
        <taxon>Eukaryota</taxon>
        <taxon>Amoebozoa</taxon>
        <taxon>Evosea</taxon>
        <taxon>Eumycetozoa</taxon>
        <taxon>Dictyostelia</taxon>
        <taxon>Dictyosteliales</taxon>
        <taxon>Dictyosteliaceae</taxon>
        <taxon>Dictyostelium</taxon>
    </lineage>
</organism>
<name>RACL_DICDI</name>
<evidence type="ECO:0000250" key="1"/>
<evidence type="ECO:0000255" key="2"/>
<evidence type="ECO:0000305" key="3"/>
<protein>
    <recommendedName>
        <fullName>Rho-related protein racL</fullName>
    </recommendedName>
</protein>
<reference key="1">
    <citation type="journal article" date="2001" name="Nucleic Acids Res.">
        <title>The Dictyostelium discoideum family of Rho-related proteins.</title>
        <authorList>
            <person name="Rivero F."/>
            <person name="Dislich H."/>
            <person name="Gloeckner G."/>
            <person name="Noegel A.A."/>
        </authorList>
    </citation>
    <scope>NUCLEOTIDE SEQUENCE [GENOMIC DNA]</scope>
    <source>
        <strain>AX4</strain>
    </source>
</reference>
<reference key="2">
    <citation type="journal article" date="2005" name="Nature">
        <title>The genome of the social amoeba Dictyostelium discoideum.</title>
        <authorList>
            <person name="Eichinger L."/>
            <person name="Pachebat J.A."/>
            <person name="Gloeckner G."/>
            <person name="Rajandream M.A."/>
            <person name="Sucgang R."/>
            <person name="Berriman M."/>
            <person name="Song J."/>
            <person name="Olsen R."/>
            <person name="Szafranski K."/>
            <person name="Xu Q."/>
            <person name="Tunggal B."/>
            <person name="Kummerfeld S."/>
            <person name="Madera M."/>
            <person name="Konfortov B.A."/>
            <person name="Rivero F."/>
            <person name="Bankier A.T."/>
            <person name="Lehmann R."/>
            <person name="Hamlin N."/>
            <person name="Davies R."/>
            <person name="Gaudet P."/>
            <person name="Fey P."/>
            <person name="Pilcher K."/>
            <person name="Chen G."/>
            <person name="Saunders D."/>
            <person name="Sodergren E.J."/>
            <person name="Davis P."/>
            <person name="Kerhornou A."/>
            <person name="Nie X."/>
            <person name="Hall N."/>
            <person name="Anjard C."/>
            <person name="Hemphill L."/>
            <person name="Bason N."/>
            <person name="Farbrother P."/>
            <person name="Desany B."/>
            <person name="Just E."/>
            <person name="Morio T."/>
            <person name="Rost R."/>
            <person name="Churcher C.M."/>
            <person name="Cooper J."/>
            <person name="Haydock S."/>
            <person name="van Driessche N."/>
            <person name="Cronin A."/>
            <person name="Goodhead I."/>
            <person name="Muzny D.M."/>
            <person name="Mourier T."/>
            <person name="Pain A."/>
            <person name="Lu M."/>
            <person name="Harper D."/>
            <person name="Lindsay R."/>
            <person name="Hauser H."/>
            <person name="James K.D."/>
            <person name="Quiles M."/>
            <person name="Madan Babu M."/>
            <person name="Saito T."/>
            <person name="Buchrieser C."/>
            <person name="Wardroper A."/>
            <person name="Felder M."/>
            <person name="Thangavelu M."/>
            <person name="Johnson D."/>
            <person name="Knights A."/>
            <person name="Loulseged H."/>
            <person name="Mungall K.L."/>
            <person name="Oliver K."/>
            <person name="Price C."/>
            <person name="Quail M.A."/>
            <person name="Urushihara H."/>
            <person name="Hernandez J."/>
            <person name="Rabbinowitsch E."/>
            <person name="Steffen D."/>
            <person name="Sanders M."/>
            <person name="Ma J."/>
            <person name="Kohara Y."/>
            <person name="Sharp S."/>
            <person name="Simmonds M.N."/>
            <person name="Spiegler S."/>
            <person name="Tivey A."/>
            <person name="Sugano S."/>
            <person name="White B."/>
            <person name="Walker D."/>
            <person name="Woodward J.R."/>
            <person name="Winckler T."/>
            <person name="Tanaka Y."/>
            <person name="Shaulsky G."/>
            <person name="Schleicher M."/>
            <person name="Weinstock G.M."/>
            <person name="Rosenthal A."/>
            <person name="Cox E.C."/>
            <person name="Chisholm R.L."/>
            <person name="Gibbs R.A."/>
            <person name="Loomis W.F."/>
            <person name="Platzer M."/>
            <person name="Kay R.R."/>
            <person name="Williams J.G."/>
            <person name="Dear P.H."/>
            <person name="Noegel A.A."/>
            <person name="Barrell B.G."/>
            <person name="Kuspa A."/>
        </authorList>
    </citation>
    <scope>NUCLEOTIDE SEQUENCE [LARGE SCALE GENOMIC DNA]</scope>
    <source>
        <strain>AX4</strain>
    </source>
</reference>